<name>SAT_IGNH4</name>
<dbReference type="EC" id="2.7.7.4" evidence="1"/>
<dbReference type="EMBL" id="CP000816">
    <property type="protein sequence ID" value="ABU82150.1"/>
    <property type="molecule type" value="Genomic_DNA"/>
</dbReference>
<dbReference type="RefSeq" id="WP_012123114.1">
    <property type="nucleotide sequence ID" value="NC_009776.1"/>
</dbReference>
<dbReference type="SMR" id="A8AB48"/>
<dbReference type="STRING" id="453591.Igni_0970"/>
<dbReference type="GeneID" id="5561764"/>
<dbReference type="KEGG" id="iho:Igni_0970"/>
<dbReference type="eggNOG" id="arCOG04191">
    <property type="taxonomic scope" value="Archaea"/>
</dbReference>
<dbReference type="HOGENOM" id="CLU_022950_1_1_2"/>
<dbReference type="OrthoDB" id="6358at2157"/>
<dbReference type="PhylomeDB" id="A8AB48"/>
<dbReference type="UniPathway" id="UPA00140">
    <property type="reaction ID" value="UER00204"/>
</dbReference>
<dbReference type="Proteomes" id="UP000000262">
    <property type="component" value="Chromosome"/>
</dbReference>
<dbReference type="GO" id="GO:0005524">
    <property type="term" value="F:ATP binding"/>
    <property type="evidence" value="ECO:0007669"/>
    <property type="project" value="UniProtKB-KW"/>
</dbReference>
<dbReference type="GO" id="GO:0004781">
    <property type="term" value="F:sulfate adenylyltransferase (ATP) activity"/>
    <property type="evidence" value="ECO:0007669"/>
    <property type="project" value="UniProtKB-UniRule"/>
</dbReference>
<dbReference type="GO" id="GO:0070814">
    <property type="term" value="P:hydrogen sulfide biosynthetic process"/>
    <property type="evidence" value="ECO:0007669"/>
    <property type="project" value="UniProtKB-UniRule"/>
</dbReference>
<dbReference type="GO" id="GO:0000103">
    <property type="term" value="P:sulfate assimilation"/>
    <property type="evidence" value="ECO:0007669"/>
    <property type="project" value="UniProtKB-UniRule"/>
</dbReference>
<dbReference type="CDD" id="cd00517">
    <property type="entry name" value="ATPS"/>
    <property type="match status" value="1"/>
</dbReference>
<dbReference type="Gene3D" id="3.40.50.620">
    <property type="entry name" value="HUPs"/>
    <property type="match status" value="1"/>
</dbReference>
<dbReference type="Gene3D" id="3.10.400.10">
    <property type="entry name" value="Sulfate adenylyltransferase"/>
    <property type="match status" value="1"/>
</dbReference>
<dbReference type="HAMAP" id="MF_00066">
    <property type="entry name" value="Sulf_adenylyltr"/>
    <property type="match status" value="1"/>
</dbReference>
<dbReference type="InterPro" id="IPR025980">
    <property type="entry name" value="ATP-Sase_PUA-like_dom"/>
</dbReference>
<dbReference type="InterPro" id="IPR015947">
    <property type="entry name" value="PUA-like_sf"/>
</dbReference>
<dbReference type="InterPro" id="IPR014729">
    <property type="entry name" value="Rossmann-like_a/b/a_fold"/>
</dbReference>
<dbReference type="InterPro" id="IPR020792">
    <property type="entry name" value="SO4_adenylyltransferase_pro"/>
</dbReference>
<dbReference type="InterPro" id="IPR024951">
    <property type="entry name" value="Sulfurylase_cat_dom"/>
</dbReference>
<dbReference type="InterPro" id="IPR002650">
    <property type="entry name" value="Sulphate_adenylyltransferase"/>
</dbReference>
<dbReference type="NCBIfam" id="NF003166">
    <property type="entry name" value="PRK04149.1"/>
    <property type="match status" value="1"/>
</dbReference>
<dbReference type="NCBIfam" id="TIGR00339">
    <property type="entry name" value="sopT"/>
    <property type="match status" value="1"/>
</dbReference>
<dbReference type="PANTHER" id="PTHR43509">
    <property type="match status" value="1"/>
</dbReference>
<dbReference type="PANTHER" id="PTHR43509:SF1">
    <property type="entry name" value="SULFATE ADENYLYLTRANSFERASE"/>
    <property type="match status" value="1"/>
</dbReference>
<dbReference type="Pfam" id="PF01747">
    <property type="entry name" value="ATP-sulfurylase"/>
    <property type="match status" value="1"/>
</dbReference>
<dbReference type="Pfam" id="PF14306">
    <property type="entry name" value="PUA_2"/>
    <property type="match status" value="1"/>
</dbReference>
<dbReference type="SUPFAM" id="SSF52374">
    <property type="entry name" value="Nucleotidylyl transferase"/>
    <property type="match status" value="1"/>
</dbReference>
<dbReference type="SUPFAM" id="SSF88697">
    <property type="entry name" value="PUA domain-like"/>
    <property type="match status" value="1"/>
</dbReference>
<reference key="1">
    <citation type="journal article" date="2008" name="Genome Biol.">
        <title>A genomic analysis of the archaeal system Ignicoccus hospitalis-Nanoarchaeum equitans.</title>
        <authorList>
            <person name="Podar M."/>
            <person name="Anderson I."/>
            <person name="Makarova K.S."/>
            <person name="Elkins J.G."/>
            <person name="Ivanova N."/>
            <person name="Wall M.A."/>
            <person name="Lykidis A."/>
            <person name="Mavromatis K."/>
            <person name="Sun H."/>
            <person name="Hudson M.E."/>
            <person name="Chen W."/>
            <person name="Deciu C."/>
            <person name="Hutchison D."/>
            <person name="Eads J.R."/>
            <person name="Anderson A."/>
            <person name="Fernandes F."/>
            <person name="Szeto E."/>
            <person name="Lapidus A."/>
            <person name="Kyrpides N.C."/>
            <person name="Saier M.H. Jr."/>
            <person name="Richardson P.M."/>
            <person name="Rachel R."/>
            <person name="Huber H."/>
            <person name="Eisen J.A."/>
            <person name="Koonin E.V."/>
            <person name="Keller M."/>
            <person name="Stetter K.O."/>
        </authorList>
    </citation>
    <scope>NUCLEOTIDE SEQUENCE [LARGE SCALE GENOMIC DNA]</scope>
    <source>
        <strain>KIN4/I / DSM 18386 / JCM 14125</strain>
    </source>
</reference>
<keyword id="KW-0067">ATP-binding</keyword>
<keyword id="KW-0547">Nucleotide-binding</keyword>
<keyword id="KW-0548">Nucleotidyltransferase</keyword>
<keyword id="KW-1185">Reference proteome</keyword>
<keyword id="KW-0808">Transferase</keyword>
<comment type="catalytic activity">
    <reaction evidence="1">
        <text>sulfate + ATP + H(+) = adenosine 5'-phosphosulfate + diphosphate</text>
        <dbReference type="Rhea" id="RHEA:18133"/>
        <dbReference type="ChEBI" id="CHEBI:15378"/>
        <dbReference type="ChEBI" id="CHEBI:16189"/>
        <dbReference type="ChEBI" id="CHEBI:30616"/>
        <dbReference type="ChEBI" id="CHEBI:33019"/>
        <dbReference type="ChEBI" id="CHEBI:58243"/>
        <dbReference type="EC" id="2.7.7.4"/>
    </reaction>
</comment>
<comment type="pathway">
    <text evidence="1">Sulfur metabolism; hydrogen sulfide biosynthesis; sulfite from sulfate: step 1/3.</text>
</comment>
<comment type="similarity">
    <text evidence="1">Belongs to the sulfate adenylyltransferase family.</text>
</comment>
<accession>A8AB48</accession>
<feature type="chain" id="PRO_1000009041" description="Sulfate adenylyltransferase">
    <location>
        <begin position="1"/>
        <end position="382"/>
    </location>
</feature>
<gene>
    <name evidence="1" type="primary">sat</name>
    <name type="ordered locus">Igni_0970</name>
</gene>
<protein>
    <recommendedName>
        <fullName evidence="1">Sulfate adenylyltransferase</fullName>
        <ecNumber evidence="1">2.7.7.4</ecNumber>
    </recommendedName>
    <alternativeName>
        <fullName evidence="1">ATP-sulfurylase</fullName>
    </alternativeName>
    <alternativeName>
        <fullName evidence="1">Sulfate adenylate transferase</fullName>
        <shortName evidence="1">SAT</shortName>
    </alternativeName>
</protein>
<organism>
    <name type="scientific">Ignicoccus hospitalis (strain KIN4/I / DSM 18386 / JCM 14125)</name>
    <dbReference type="NCBI Taxonomy" id="453591"/>
    <lineage>
        <taxon>Archaea</taxon>
        <taxon>Thermoproteota</taxon>
        <taxon>Thermoprotei</taxon>
        <taxon>Desulfurococcales</taxon>
        <taxon>Desulfurococcaceae</taxon>
        <taxon>Ignicoccus</taxon>
    </lineage>
</organism>
<sequence length="382" mass="44062">MVSKPHGGKLVERVAKGKTRERLVEEAKEMVNVQVDEGLAADVANVAHGVYSPLEGFMVREDYLSVLEFMRLSNDLPWTIPIILDVDENVKKSVREGDEVAIFFKGKPIAILYVEEIFPWDKNYHTLKVFKTDDLNHPGVRKVFNKKDYLLGGPLIQISDVPEPFEKYRLWPKETRVLFEQKGWKRVAAFQTRNVPHLGHEYVQKAALTFTDGLFVNPLVGWKKPGDFRDEVIIKAYEALIEHYYPKDSVAFSVLRMEMRYAGPREAVHHAIVRKNFGATHFIVGRDHAGVGNYYGPYEAWDIFKNFPDLGITPLFVREAFYCKKCGGMVNEKICPHPEEYRIRISGTKLRKMIMEGKRPPEYMMRPEVAEVVLSFEDPFVH</sequence>
<proteinExistence type="inferred from homology"/>
<evidence type="ECO:0000255" key="1">
    <source>
        <dbReference type="HAMAP-Rule" id="MF_00066"/>
    </source>
</evidence>